<accession>Q9ZM51</accession>
<gene>
    <name type="primary">minC</name>
    <name type="ordered locus">jhp_0372</name>
</gene>
<organism>
    <name type="scientific">Helicobacter pylori (strain J99 / ATCC 700824)</name>
    <name type="common">Campylobacter pylori J99</name>
    <dbReference type="NCBI Taxonomy" id="85963"/>
    <lineage>
        <taxon>Bacteria</taxon>
        <taxon>Pseudomonadati</taxon>
        <taxon>Campylobacterota</taxon>
        <taxon>Epsilonproteobacteria</taxon>
        <taxon>Campylobacterales</taxon>
        <taxon>Helicobacteraceae</taxon>
        <taxon>Helicobacter</taxon>
    </lineage>
</organism>
<evidence type="ECO:0000250" key="1"/>
<evidence type="ECO:0000305" key="2"/>
<proteinExistence type="inferred from homology"/>
<reference key="1">
    <citation type="journal article" date="1999" name="Nature">
        <title>Genomic sequence comparison of two unrelated isolates of the human gastric pathogen Helicobacter pylori.</title>
        <authorList>
            <person name="Alm R.A."/>
            <person name="Ling L.-S.L."/>
            <person name="Moir D.T."/>
            <person name="King B.L."/>
            <person name="Brown E.D."/>
            <person name="Doig P.C."/>
            <person name="Smith D.R."/>
            <person name="Noonan B."/>
            <person name="Guild B.C."/>
            <person name="deJonge B.L."/>
            <person name="Carmel G."/>
            <person name="Tummino P.J."/>
            <person name="Caruso A."/>
            <person name="Uria-Nickelsen M."/>
            <person name="Mills D.M."/>
            <person name="Ives C."/>
            <person name="Gibson R."/>
            <person name="Merberg D."/>
            <person name="Mills S.D."/>
            <person name="Jiang Q."/>
            <person name="Taylor D.E."/>
            <person name="Vovis G.F."/>
            <person name="Trust T.J."/>
        </authorList>
    </citation>
    <scope>NUCLEOTIDE SEQUENCE [LARGE SCALE GENOMIC DNA]</scope>
    <source>
        <strain>J99 / ATCC 700824</strain>
    </source>
</reference>
<sequence>MLKTNQKNVHAFEIEKQEPEAVMEFLEKNHALLQYFLIIFKYDIESEVKAVLHKHQLLFLETNRALNGRYIKTTEKDANLLKQNSPNAIEPKTTIYERNIRSGEEIYSTNHLIFLGNIHNGAKIISEGSVSVYGVCEGAIVCFGEYLILKEVKSAQIVFQNKILSLKEVERLLVNKNIKIITKNDDILDIKEVL</sequence>
<comment type="function">
    <text evidence="1">Cell division inhibitor that blocks the formation of polar Z ring septums. Rapidly oscillates between the poles of the cell to destabilize FtsZ filaments that have formed before they mature into polar Z rings. Prevents FtsZ polymerization (By similarity).</text>
</comment>
<comment type="subunit">
    <text evidence="1">Interacts with MinD and FtsZ.</text>
</comment>
<comment type="similarity">
    <text evidence="2">Belongs to the MinC family.</text>
</comment>
<protein>
    <recommendedName>
        <fullName>Probable septum site-determining protein MinC</fullName>
    </recommendedName>
</protein>
<keyword id="KW-0131">Cell cycle</keyword>
<keyword id="KW-0132">Cell division</keyword>
<keyword id="KW-0717">Septation</keyword>
<name>MINC_HELPJ</name>
<dbReference type="EMBL" id="AE001439">
    <property type="protein sequence ID" value="AAD05953.1"/>
    <property type="molecule type" value="Genomic_DNA"/>
</dbReference>
<dbReference type="PIR" id="H71939">
    <property type="entry name" value="H71939"/>
</dbReference>
<dbReference type="RefSeq" id="WP_000921108.1">
    <property type="nucleotide sequence ID" value="NC_000921.1"/>
</dbReference>
<dbReference type="SMR" id="Q9ZM51"/>
<dbReference type="KEGG" id="hpj:jhp_0372"/>
<dbReference type="PATRIC" id="fig|85963.30.peg.639"/>
<dbReference type="eggNOG" id="COG0850">
    <property type="taxonomic scope" value="Bacteria"/>
</dbReference>
<dbReference type="Proteomes" id="UP000000804">
    <property type="component" value="Chromosome"/>
</dbReference>
<dbReference type="GO" id="GO:0000902">
    <property type="term" value="P:cell morphogenesis"/>
    <property type="evidence" value="ECO:0007669"/>
    <property type="project" value="InterPro"/>
</dbReference>
<dbReference type="GO" id="GO:0000917">
    <property type="term" value="P:division septum assembly"/>
    <property type="evidence" value="ECO:0007669"/>
    <property type="project" value="UniProtKB-KW"/>
</dbReference>
<dbReference type="GO" id="GO:1901891">
    <property type="term" value="P:regulation of cell septum assembly"/>
    <property type="evidence" value="ECO:0007669"/>
    <property type="project" value="InterPro"/>
</dbReference>
<dbReference type="Gene3D" id="2.160.20.70">
    <property type="match status" value="1"/>
</dbReference>
<dbReference type="HAMAP" id="MF_00267">
    <property type="entry name" value="MinC"/>
    <property type="match status" value="1"/>
</dbReference>
<dbReference type="InterPro" id="IPR016098">
    <property type="entry name" value="CAP/MinC_C"/>
</dbReference>
<dbReference type="InterPro" id="IPR013033">
    <property type="entry name" value="MinC"/>
</dbReference>
<dbReference type="InterPro" id="IPR036145">
    <property type="entry name" value="MinC_C_sf"/>
</dbReference>
<dbReference type="InterPro" id="IPR005526">
    <property type="entry name" value="Septum_form_inhib_MinC_C"/>
</dbReference>
<dbReference type="NCBIfam" id="NF001818">
    <property type="entry name" value="PRK00556.1-2"/>
    <property type="match status" value="1"/>
</dbReference>
<dbReference type="PANTHER" id="PTHR34108">
    <property type="entry name" value="SEPTUM SITE-DETERMINING PROTEIN MINC"/>
    <property type="match status" value="1"/>
</dbReference>
<dbReference type="PANTHER" id="PTHR34108:SF1">
    <property type="entry name" value="SEPTUM SITE-DETERMINING PROTEIN MINC"/>
    <property type="match status" value="1"/>
</dbReference>
<dbReference type="Pfam" id="PF03775">
    <property type="entry name" value="MinC_C"/>
    <property type="match status" value="1"/>
</dbReference>
<dbReference type="SUPFAM" id="SSF63848">
    <property type="entry name" value="Cell-division inhibitor MinC, C-terminal domain"/>
    <property type="match status" value="1"/>
</dbReference>
<feature type="chain" id="PRO_0000189039" description="Probable septum site-determining protein MinC">
    <location>
        <begin position="1"/>
        <end position="194"/>
    </location>
</feature>